<proteinExistence type="predicted"/>
<accession>P0AB15</accession>
<accession>P46131</accession>
<gene>
    <name type="primary">yccJ</name>
    <name type="ordered locus">c1139</name>
</gene>
<keyword id="KW-1185">Reference proteome</keyword>
<protein>
    <recommendedName>
        <fullName>Uncharacterized protein YccJ</fullName>
    </recommendedName>
</protein>
<feature type="chain" id="PRO_0000168787" description="Uncharacterized protein YccJ">
    <location>
        <begin position="1"/>
        <end position="75"/>
    </location>
</feature>
<name>YCCJ_ECOL6</name>
<sequence length="75" mass="8524">MPTQEAKAHHVGEWASLRNTSPEIAEAIFEVAGYDEKMAEKIWEEGSDEVLVKAFAKTDKDSLFWGEQTIERKNV</sequence>
<reference key="1">
    <citation type="journal article" date="2002" name="Proc. Natl. Acad. Sci. U.S.A.">
        <title>Extensive mosaic structure revealed by the complete genome sequence of uropathogenic Escherichia coli.</title>
        <authorList>
            <person name="Welch R.A."/>
            <person name="Burland V."/>
            <person name="Plunkett G. III"/>
            <person name="Redford P."/>
            <person name="Roesch P."/>
            <person name="Rasko D."/>
            <person name="Buckles E.L."/>
            <person name="Liou S.-R."/>
            <person name="Boutin A."/>
            <person name="Hackett J."/>
            <person name="Stroud D."/>
            <person name="Mayhew G.F."/>
            <person name="Rose D.J."/>
            <person name="Zhou S."/>
            <person name="Schwartz D.C."/>
            <person name="Perna N.T."/>
            <person name="Mobley H.L.T."/>
            <person name="Donnenberg M.S."/>
            <person name="Blattner F.R."/>
        </authorList>
    </citation>
    <scope>NUCLEOTIDE SEQUENCE [LARGE SCALE GENOMIC DNA]</scope>
    <source>
        <strain>CFT073 / ATCC 700928 / UPEC</strain>
    </source>
</reference>
<organism>
    <name type="scientific">Escherichia coli O6:H1 (strain CFT073 / ATCC 700928 / UPEC)</name>
    <dbReference type="NCBI Taxonomy" id="199310"/>
    <lineage>
        <taxon>Bacteria</taxon>
        <taxon>Pseudomonadati</taxon>
        <taxon>Pseudomonadota</taxon>
        <taxon>Gammaproteobacteria</taxon>
        <taxon>Enterobacterales</taxon>
        <taxon>Enterobacteriaceae</taxon>
        <taxon>Escherichia</taxon>
    </lineage>
</organism>
<dbReference type="EMBL" id="AE014075">
    <property type="protein sequence ID" value="AAN79607.1"/>
    <property type="molecule type" value="Genomic_DNA"/>
</dbReference>
<dbReference type="RefSeq" id="WP_001143120.1">
    <property type="nucleotide sequence ID" value="NZ_CP051263.1"/>
</dbReference>
<dbReference type="STRING" id="199310.c1139"/>
<dbReference type="KEGG" id="ecc:c1139"/>
<dbReference type="eggNOG" id="ENOG5032RZ6">
    <property type="taxonomic scope" value="Bacteria"/>
</dbReference>
<dbReference type="HOGENOM" id="CLU_202423_0_0_6"/>
<dbReference type="BioCyc" id="ECOL199310:C1139-MONOMER"/>
<dbReference type="Proteomes" id="UP000001410">
    <property type="component" value="Chromosome"/>
</dbReference>
<dbReference type="InterPro" id="IPR025600">
    <property type="entry name" value="YccJ"/>
</dbReference>
<dbReference type="NCBIfam" id="NF007554">
    <property type="entry name" value="PRK10174.1"/>
    <property type="match status" value="1"/>
</dbReference>
<dbReference type="Pfam" id="PF13993">
    <property type="entry name" value="YccJ"/>
    <property type="match status" value="1"/>
</dbReference>